<dbReference type="EC" id="1.3.7.7" evidence="1"/>
<dbReference type="EMBL" id="DQ630521">
    <property type="protein sequence ID" value="ABF60155.1"/>
    <property type="molecule type" value="Genomic_DNA"/>
</dbReference>
<dbReference type="RefSeq" id="YP_764439.1">
    <property type="nucleotide sequence ID" value="NC_008372.1"/>
</dbReference>
<dbReference type="SMR" id="Q06SC7"/>
<dbReference type="GeneID" id="4308398"/>
<dbReference type="UniPathway" id="UPA00670"/>
<dbReference type="GO" id="GO:0009507">
    <property type="term" value="C:chloroplast"/>
    <property type="evidence" value="ECO:0007669"/>
    <property type="project" value="UniProtKB-SubCell"/>
</dbReference>
<dbReference type="GO" id="GO:0051539">
    <property type="term" value="F:4 iron, 4 sulfur cluster binding"/>
    <property type="evidence" value="ECO:0007669"/>
    <property type="project" value="UniProtKB-UniRule"/>
</dbReference>
<dbReference type="GO" id="GO:0005524">
    <property type="term" value="F:ATP binding"/>
    <property type="evidence" value="ECO:0007669"/>
    <property type="project" value="UniProtKB-UniRule"/>
</dbReference>
<dbReference type="GO" id="GO:0046872">
    <property type="term" value="F:metal ion binding"/>
    <property type="evidence" value="ECO:0007669"/>
    <property type="project" value="UniProtKB-KW"/>
</dbReference>
<dbReference type="GO" id="GO:0016730">
    <property type="term" value="F:oxidoreductase activity, acting on iron-sulfur proteins as donors"/>
    <property type="evidence" value="ECO:0007669"/>
    <property type="project" value="InterPro"/>
</dbReference>
<dbReference type="GO" id="GO:0016636">
    <property type="term" value="F:oxidoreductase activity, acting on the CH-CH group of donors, iron-sulfur protein as acceptor"/>
    <property type="evidence" value="ECO:0007669"/>
    <property type="project" value="UniProtKB-UniRule"/>
</dbReference>
<dbReference type="GO" id="GO:0036068">
    <property type="term" value="P:light-independent chlorophyll biosynthetic process"/>
    <property type="evidence" value="ECO:0007669"/>
    <property type="project" value="UniProtKB-UniRule"/>
</dbReference>
<dbReference type="GO" id="GO:0019685">
    <property type="term" value="P:photosynthesis, dark reaction"/>
    <property type="evidence" value="ECO:0007669"/>
    <property type="project" value="InterPro"/>
</dbReference>
<dbReference type="CDD" id="cd02032">
    <property type="entry name" value="Bchl-like"/>
    <property type="match status" value="1"/>
</dbReference>
<dbReference type="Gene3D" id="3.40.50.300">
    <property type="entry name" value="P-loop containing nucleotide triphosphate hydrolases"/>
    <property type="match status" value="1"/>
</dbReference>
<dbReference type="HAMAP" id="MF_00355">
    <property type="entry name" value="ChlL_BchL"/>
    <property type="match status" value="1"/>
</dbReference>
<dbReference type="InterPro" id="IPR030655">
    <property type="entry name" value="NifH/chlL_CS"/>
</dbReference>
<dbReference type="InterPro" id="IPR000392">
    <property type="entry name" value="NifH/frxC"/>
</dbReference>
<dbReference type="InterPro" id="IPR027417">
    <property type="entry name" value="P-loop_NTPase"/>
</dbReference>
<dbReference type="InterPro" id="IPR005971">
    <property type="entry name" value="Protochlorophyllide_ATP-bd"/>
</dbReference>
<dbReference type="NCBIfam" id="TIGR01281">
    <property type="entry name" value="DPOR_bchL"/>
    <property type="match status" value="1"/>
</dbReference>
<dbReference type="PANTHER" id="PTHR42864">
    <property type="entry name" value="LIGHT-INDEPENDENT PROTOCHLOROPHYLLIDE REDUCTASE IRON-SULFUR ATP-BINDING PROTEIN"/>
    <property type="match status" value="1"/>
</dbReference>
<dbReference type="PANTHER" id="PTHR42864:SF2">
    <property type="entry name" value="LIGHT-INDEPENDENT PROTOCHLOROPHYLLIDE REDUCTASE IRON-SULFUR ATP-BINDING PROTEIN"/>
    <property type="match status" value="1"/>
</dbReference>
<dbReference type="Pfam" id="PF00142">
    <property type="entry name" value="Fer4_NifH"/>
    <property type="match status" value="1"/>
</dbReference>
<dbReference type="PIRSF" id="PIRSF000363">
    <property type="entry name" value="Nitrogenase_iron"/>
    <property type="match status" value="1"/>
</dbReference>
<dbReference type="PRINTS" id="PR00091">
    <property type="entry name" value="NITROGNASEII"/>
</dbReference>
<dbReference type="SUPFAM" id="SSF52540">
    <property type="entry name" value="P-loop containing nucleoside triphosphate hydrolases"/>
    <property type="match status" value="1"/>
</dbReference>
<dbReference type="PROSITE" id="PS00746">
    <property type="entry name" value="NIFH_FRXC_1"/>
    <property type="match status" value="1"/>
</dbReference>
<dbReference type="PROSITE" id="PS00692">
    <property type="entry name" value="NIFH_FRXC_2"/>
    <property type="match status" value="1"/>
</dbReference>
<dbReference type="PROSITE" id="PS51026">
    <property type="entry name" value="NIFH_FRXC_3"/>
    <property type="match status" value="1"/>
</dbReference>
<proteinExistence type="inferred from homology"/>
<keyword id="KW-0004">4Fe-4S</keyword>
<keyword id="KW-0067">ATP-binding</keyword>
<keyword id="KW-0149">Chlorophyll biosynthesis</keyword>
<keyword id="KW-0150">Chloroplast</keyword>
<keyword id="KW-0408">Iron</keyword>
<keyword id="KW-0411">Iron-sulfur</keyword>
<keyword id="KW-0460">Magnesium</keyword>
<keyword id="KW-0479">Metal-binding</keyword>
<keyword id="KW-0547">Nucleotide-binding</keyword>
<keyword id="KW-0560">Oxidoreductase</keyword>
<keyword id="KW-0602">Photosynthesis</keyword>
<keyword id="KW-0934">Plastid</keyword>
<gene>
    <name evidence="1" type="primary">chlL</name>
</gene>
<reference key="1">
    <citation type="journal article" date="2006" name="Mol. Genet. Genomics">
        <title>Distinctive architecture of the chloroplast genome in the chlorophycean green alga Stigeoclonium helveticum.</title>
        <authorList>
            <person name="Belanger A.-S."/>
            <person name="Brouard J.-S."/>
            <person name="Charlebois P."/>
            <person name="Otis C."/>
            <person name="Lemieux C."/>
            <person name="Turmel M."/>
        </authorList>
    </citation>
    <scope>NUCLEOTIDE SEQUENCE [LARGE SCALE GENOMIC DNA]</scope>
    <source>
        <strain>UTEX 441</strain>
    </source>
</reference>
<accession>Q06SC7</accession>
<sequence length="288" mass="31706">MKLAVYGKGGIGKSTTSCNISIALARRGKKVLQIGCDPKHDSTFTLTGFLIPTIIDTLQAKDYHYENVWPEDVIYQGYGGVDCVEAGGPPAGAGCGGYVVGETVKLLKELNAFYEYDIILFDVLGDVVCGGFAAPLNYADYCLIVTDNGFDALFAANRIAASVREKARTHPLRLAGLVANRTTKRDLIDKYVQVCPIPVLEVLPLLEDIRVSRVKGKTLFEMAESEPDLSFVLDYYLNIADQLLTEPEGVVPRELGDRELFSLLSDFYLNIENQTSVNKTEKLDFFLV</sequence>
<evidence type="ECO:0000255" key="1">
    <source>
        <dbReference type="HAMAP-Rule" id="MF_00355"/>
    </source>
</evidence>
<feature type="chain" id="PRO_0000275269" description="Light-independent protochlorophyllide reductase iron-sulfur ATP-binding protein">
    <location>
        <begin position="1"/>
        <end position="288"/>
    </location>
</feature>
<feature type="binding site" evidence="1">
    <location>
        <begin position="10"/>
        <end position="15"/>
    </location>
    <ligand>
        <name>ATP</name>
        <dbReference type="ChEBI" id="CHEBI:30616"/>
    </ligand>
</feature>
<feature type="binding site" evidence="1">
    <location>
        <position position="14"/>
    </location>
    <ligand>
        <name>Mg(2+)</name>
        <dbReference type="ChEBI" id="CHEBI:18420"/>
    </ligand>
</feature>
<feature type="binding site" evidence="1">
    <location>
        <position position="39"/>
    </location>
    <ligand>
        <name>ATP</name>
        <dbReference type="ChEBI" id="CHEBI:30616"/>
    </ligand>
</feature>
<feature type="binding site" evidence="1">
    <location>
        <position position="95"/>
    </location>
    <ligand>
        <name>[4Fe-4S] cluster</name>
        <dbReference type="ChEBI" id="CHEBI:49883"/>
        <note>ligand shared between dimeric partners</note>
    </ligand>
</feature>
<feature type="binding site" evidence="1">
    <location>
        <position position="129"/>
    </location>
    <ligand>
        <name>[4Fe-4S] cluster</name>
        <dbReference type="ChEBI" id="CHEBI:49883"/>
        <note>ligand shared between dimeric partners</note>
    </ligand>
</feature>
<feature type="binding site" evidence="1">
    <location>
        <begin position="180"/>
        <end position="181"/>
    </location>
    <ligand>
        <name>ATP</name>
        <dbReference type="ChEBI" id="CHEBI:30616"/>
    </ligand>
</feature>
<feature type="binding site" evidence="1">
    <location>
        <begin position="204"/>
        <end position="206"/>
    </location>
    <ligand>
        <name>ATP</name>
        <dbReference type="ChEBI" id="CHEBI:30616"/>
    </ligand>
</feature>
<organism>
    <name type="scientific">Stigeoclonium helveticum</name>
    <name type="common">Green alga</name>
    <dbReference type="NCBI Taxonomy" id="55999"/>
    <lineage>
        <taxon>Eukaryota</taxon>
        <taxon>Viridiplantae</taxon>
        <taxon>Chlorophyta</taxon>
        <taxon>core chlorophytes</taxon>
        <taxon>Chlorophyceae</taxon>
        <taxon>OCC clade</taxon>
        <taxon>Chaetophorales</taxon>
        <taxon>Chaetophoraceae</taxon>
        <taxon>Stigeoclonium</taxon>
    </lineage>
</organism>
<comment type="function">
    <text evidence="1">Component of the dark-operative protochlorophyllide reductase (DPOR) that uses Mg-ATP and reduced ferredoxin to reduce ring D of protochlorophyllide (Pchlide) to form chlorophyllide a (Chlide). This reaction is light-independent. The L component serves as a unique electron donor to the NB-component of the complex, and binds Mg-ATP.</text>
</comment>
<comment type="catalytic activity">
    <reaction evidence="1">
        <text>chlorophyllide a + oxidized 2[4Fe-4S]-[ferredoxin] + 2 ADP + 2 phosphate = protochlorophyllide a + reduced 2[4Fe-4S]-[ferredoxin] + 2 ATP + 2 H2O</text>
        <dbReference type="Rhea" id="RHEA:28202"/>
        <dbReference type="Rhea" id="RHEA-COMP:10002"/>
        <dbReference type="Rhea" id="RHEA-COMP:10004"/>
        <dbReference type="ChEBI" id="CHEBI:15377"/>
        <dbReference type="ChEBI" id="CHEBI:30616"/>
        <dbReference type="ChEBI" id="CHEBI:33722"/>
        <dbReference type="ChEBI" id="CHEBI:33723"/>
        <dbReference type="ChEBI" id="CHEBI:43474"/>
        <dbReference type="ChEBI" id="CHEBI:83348"/>
        <dbReference type="ChEBI" id="CHEBI:83350"/>
        <dbReference type="ChEBI" id="CHEBI:456216"/>
        <dbReference type="EC" id="1.3.7.7"/>
    </reaction>
</comment>
<comment type="cofactor">
    <cofactor evidence="1">
        <name>[4Fe-4S] cluster</name>
        <dbReference type="ChEBI" id="CHEBI:49883"/>
    </cofactor>
    <text evidence="1">Binds 1 [4Fe-4S] cluster per dimer.</text>
</comment>
<comment type="pathway">
    <text evidence="1">Porphyrin-containing compound metabolism; chlorophyll biosynthesis (light-independent).</text>
</comment>
<comment type="subunit">
    <text evidence="1">Homodimer. Protochlorophyllide reductase is composed of three subunits; ChlL, ChlN and ChlB.</text>
</comment>
<comment type="subcellular location">
    <subcellularLocation>
        <location>Plastid</location>
        <location>Chloroplast</location>
    </subcellularLocation>
</comment>
<comment type="similarity">
    <text evidence="1">Belongs to the NifH/BchL/ChlL family.</text>
</comment>
<protein>
    <recommendedName>
        <fullName evidence="1">Light-independent protochlorophyllide reductase iron-sulfur ATP-binding protein</fullName>
        <shortName evidence="1">DPOR subunit L</shortName>
        <shortName evidence="1">LI-POR subunit L</shortName>
        <ecNumber evidence="1">1.3.7.7</ecNumber>
    </recommendedName>
</protein>
<name>CHLL_STIHE</name>
<geneLocation type="chloroplast"/>